<evidence type="ECO:0000255" key="1">
    <source>
        <dbReference type="HAMAP-Rule" id="MF_00059"/>
    </source>
</evidence>
<accession>P56762</accession>
<feature type="chain" id="PRO_0000175440" description="DNA-directed RNA polymerase subunit alpha">
    <location>
        <begin position="1"/>
        <end position="329"/>
    </location>
</feature>
<feature type="region of interest" description="Alpha N-terminal domain (alpha-NTD)" evidence="1">
    <location>
        <begin position="1"/>
        <end position="233"/>
    </location>
</feature>
<feature type="region of interest" description="Alpha C-terminal domain (alpha-CTD)" evidence="1">
    <location>
        <begin position="266"/>
        <end position="329"/>
    </location>
</feature>
<keyword id="KW-0150">Chloroplast</keyword>
<keyword id="KW-0240">DNA-directed RNA polymerase</keyword>
<keyword id="KW-0548">Nucleotidyltransferase</keyword>
<keyword id="KW-0934">Plastid</keyword>
<keyword id="KW-1185">Reference proteome</keyword>
<keyword id="KW-0804">Transcription</keyword>
<keyword id="KW-0808">Transferase</keyword>
<gene>
    <name evidence="1" type="primary">rpoA</name>
    <name type="ordered locus">AtCg00740</name>
</gene>
<geneLocation type="chloroplast"/>
<reference key="1">
    <citation type="journal article" date="1999" name="DNA Res.">
        <title>Complete structure of the chloroplast genome of Arabidopsis thaliana.</title>
        <authorList>
            <person name="Sato S."/>
            <person name="Nakamura Y."/>
            <person name="Kaneko T."/>
            <person name="Asamizu E."/>
            <person name="Tabata S."/>
        </authorList>
    </citation>
    <scope>NUCLEOTIDE SEQUENCE [LARGE SCALE GENOMIC DNA]</scope>
    <source>
        <strain>cv. Columbia</strain>
    </source>
</reference>
<protein>
    <recommendedName>
        <fullName evidence="1">DNA-directed RNA polymerase subunit alpha</fullName>
        <shortName evidence="1">PEP</shortName>
        <ecNumber evidence="1">2.7.7.6</ecNumber>
    </recommendedName>
    <alternativeName>
        <fullName evidence="1">Plastid-encoded RNA polymerase subunit alpha</fullName>
        <shortName evidence="1">RNA polymerase subunit alpha</shortName>
    </alternativeName>
</protein>
<comment type="function">
    <text evidence="1">DNA-dependent RNA polymerase catalyzes the transcription of DNA into RNA using the four ribonucleoside triphosphates as substrates.</text>
</comment>
<comment type="catalytic activity">
    <reaction evidence="1">
        <text>RNA(n) + a ribonucleoside 5'-triphosphate = RNA(n+1) + diphosphate</text>
        <dbReference type="Rhea" id="RHEA:21248"/>
        <dbReference type="Rhea" id="RHEA-COMP:14527"/>
        <dbReference type="Rhea" id="RHEA-COMP:17342"/>
        <dbReference type="ChEBI" id="CHEBI:33019"/>
        <dbReference type="ChEBI" id="CHEBI:61557"/>
        <dbReference type="ChEBI" id="CHEBI:140395"/>
        <dbReference type="EC" id="2.7.7.6"/>
    </reaction>
</comment>
<comment type="subunit">
    <text evidence="1">In plastids the minimal PEP RNA polymerase catalytic core is composed of four subunits: alpha, beta, beta', and beta''. When a (nuclear-encoded) sigma factor is associated with the core the holoenzyme is formed, which can initiate transcription.</text>
</comment>
<comment type="subcellular location">
    <subcellularLocation>
        <location>Plastid</location>
        <location>Chloroplast</location>
    </subcellularLocation>
</comment>
<comment type="domain">
    <text evidence="1">The N-terminal domain is essential for RNAP assembly and basal transcription, whereas the C-terminal domain is involved in interaction with transcriptional regulators and with upstream promoter elements.</text>
</comment>
<comment type="similarity">
    <text evidence="1">Belongs to the RNA polymerase alpha chain family.</text>
</comment>
<dbReference type="EC" id="2.7.7.6" evidence="1"/>
<dbReference type="EMBL" id="AP000423">
    <property type="protein sequence ID" value="BAA84417.1"/>
    <property type="molecule type" value="Genomic_DNA"/>
</dbReference>
<dbReference type="RefSeq" id="NP_051090.1">
    <property type="nucleotide sequence ID" value="NC_000932.1"/>
</dbReference>
<dbReference type="SMR" id="P56762"/>
<dbReference type="BioGRID" id="29933">
    <property type="interactions" value="24"/>
</dbReference>
<dbReference type="FunCoup" id="P56762">
    <property type="interactions" value="157"/>
</dbReference>
<dbReference type="IntAct" id="P56762">
    <property type="interactions" value="1"/>
</dbReference>
<dbReference type="MINT" id="P56762"/>
<dbReference type="STRING" id="3702.P56762"/>
<dbReference type="PaxDb" id="3702-ATCG00740.1"/>
<dbReference type="ProteomicsDB" id="226920"/>
<dbReference type="EnsemblPlants" id="ATCG00740.1">
    <property type="protein sequence ID" value="ATCG00740.1"/>
    <property type="gene ID" value="ATCG00740"/>
</dbReference>
<dbReference type="GeneID" id="844727"/>
<dbReference type="Gramene" id="ATCG00740.1">
    <property type="protein sequence ID" value="ATCG00740.1"/>
    <property type="gene ID" value="ATCG00740"/>
</dbReference>
<dbReference type="KEGG" id="ath:ArthCp055"/>
<dbReference type="Araport" id="ATCG00740"/>
<dbReference type="TAIR" id="ATCG00740">
    <property type="gene designation" value="RPOA"/>
</dbReference>
<dbReference type="eggNOG" id="ENOG502QRS7">
    <property type="taxonomic scope" value="Eukaryota"/>
</dbReference>
<dbReference type="HOGENOM" id="CLU_053084_2_0_1"/>
<dbReference type="InParanoid" id="P56762"/>
<dbReference type="OMA" id="PIKNVKY"/>
<dbReference type="PRO" id="PR:P56762"/>
<dbReference type="Proteomes" id="UP000006548">
    <property type="component" value="Chloroplast Pltd"/>
</dbReference>
<dbReference type="ExpressionAtlas" id="P56762">
    <property type="expression patterns" value="baseline and differential"/>
</dbReference>
<dbReference type="GO" id="GO:0009507">
    <property type="term" value="C:chloroplast"/>
    <property type="evidence" value="ECO:0007005"/>
    <property type="project" value="TAIR"/>
</dbReference>
<dbReference type="GO" id="GO:0042644">
    <property type="term" value="C:chloroplast nucleoid"/>
    <property type="evidence" value="ECO:0007005"/>
    <property type="project" value="TAIR"/>
</dbReference>
<dbReference type="GO" id="GO:0009570">
    <property type="term" value="C:chloroplast stroma"/>
    <property type="evidence" value="ECO:0007005"/>
    <property type="project" value="TAIR"/>
</dbReference>
<dbReference type="GO" id="GO:0009534">
    <property type="term" value="C:chloroplast thylakoid"/>
    <property type="evidence" value="ECO:0007005"/>
    <property type="project" value="TAIR"/>
</dbReference>
<dbReference type="GO" id="GO:0000428">
    <property type="term" value="C:DNA-directed RNA polymerase complex"/>
    <property type="evidence" value="ECO:0007669"/>
    <property type="project" value="UniProtKB-KW"/>
</dbReference>
<dbReference type="GO" id="GO:0005739">
    <property type="term" value="C:mitochondrion"/>
    <property type="evidence" value="ECO:0007669"/>
    <property type="project" value="GOC"/>
</dbReference>
<dbReference type="GO" id="GO:0009536">
    <property type="term" value="C:plastid"/>
    <property type="evidence" value="ECO:0007005"/>
    <property type="project" value="TAIR"/>
</dbReference>
<dbReference type="GO" id="GO:0003677">
    <property type="term" value="F:DNA binding"/>
    <property type="evidence" value="ECO:0007669"/>
    <property type="project" value="UniProtKB-UniRule"/>
</dbReference>
<dbReference type="GO" id="GO:0003899">
    <property type="term" value="F:DNA-directed RNA polymerase activity"/>
    <property type="evidence" value="ECO:0007669"/>
    <property type="project" value="UniProtKB-UniRule"/>
</dbReference>
<dbReference type="GO" id="GO:0046983">
    <property type="term" value="F:protein dimerization activity"/>
    <property type="evidence" value="ECO:0007669"/>
    <property type="project" value="InterPro"/>
</dbReference>
<dbReference type="GO" id="GO:0006351">
    <property type="term" value="P:DNA-templated transcription"/>
    <property type="evidence" value="ECO:0007669"/>
    <property type="project" value="UniProtKB-UniRule"/>
</dbReference>
<dbReference type="CDD" id="cd06928">
    <property type="entry name" value="RNAP_alpha_NTD"/>
    <property type="match status" value="1"/>
</dbReference>
<dbReference type="FunFam" id="1.10.150.20:FF:000021">
    <property type="entry name" value="DNA-directed RNA polymerase subunit alpha"/>
    <property type="match status" value="1"/>
</dbReference>
<dbReference type="FunFam" id="2.170.120.12:FF:000001">
    <property type="entry name" value="DNA-directed RNA polymerase subunit alpha"/>
    <property type="match status" value="1"/>
</dbReference>
<dbReference type="FunFam" id="3.30.1360.10:FF:000039">
    <property type="entry name" value="DNA-directed RNA polymerase subunit alpha"/>
    <property type="match status" value="1"/>
</dbReference>
<dbReference type="Gene3D" id="1.10.150.20">
    <property type="entry name" value="5' to 3' exonuclease, C-terminal subdomain"/>
    <property type="match status" value="1"/>
</dbReference>
<dbReference type="Gene3D" id="2.170.120.12">
    <property type="entry name" value="DNA-directed RNA polymerase, insert domain"/>
    <property type="match status" value="1"/>
</dbReference>
<dbReference type="Gene3D" id="3.30.1360.10">
    <property type="entry name" value="RNA polymerase, RBP11-like subunit"/>
    <property type="match status" value="1"/>
</dbReference>
<dbReference type="HAMAP" id="MF_00059">
    <property type="entry name" value="RNApol_bact_RpoA"/>
    <property type="match status" value="1"/>
</dbReference>
<dbReference type="InterPro" id="IPR011262">
    <property type="entry name" value="DNA-dir_RNA_pol_insert"/>
</dbReference>
<dbReference type="InterPro" id="IPR011263">
    <property type="entry name" value="DNA-dir_RNA_pol_RpoA/D/Rpb3"/>
</dbReference>
<dbReference type="InterPro" id="IPR011773">
    <property type="entry name" value="DNA-dir_RpoA"/>
</dbReference>
<dbReference type="InterPro" id="IPR036603">
    <property type="entry name" value="RBP11-like"/>
</dbReference>
<dbReference type="InterPro" id="IPR011260">
    <property type="entry name" value="RNAP_asu_C"/>
</dbReference>
<dbReference type="InterPro" id="IPR036643">
    <property type="entry name" value="RNApol_insert_sf"/>
</dbReference>
<dbReference type="NCBIfam" id="TIGR02027">
    <property type="entry name" value="rpoA"/>
    <property type="match status" value="1"/>
</dbReference>
<dbReference type="Pfam" id="PF01000">
    <property type="entry name" value="RNA_pol_A_bac"/>
    <property type="match status" value="1"/>
</dbReference>
<dbReference type="Pfam" id="PF03118">
    <property type="entry name" value="RNA_pol_A_CTD"/>
    <property type="match status" value="1"/>
</dbReference>
<dbReference type="Pfam" id="PF01193">
    <property type="entry name" value="RNA_pol_L"/>
    <property type="match status" value="1"/>
</dbReference>
<dbReference type="SMART" id="SM00662">
    <property type="entry name" value="RPOLD"/>
    <property type="match status" value="1"/>
</dbReference>
<dbReference type="SUPFAM" id="SSF47789">
    <property type="entry name" value="C-terminal domain of RNA polymerase alpha subunit"/>
    <property type="match status" value="1"/>
</dbReference>
<dbReference type="SUPFAM" id="SSF56553">
    <property type="entry name" value="Insert subdomain of RNA polymerase alpha subunit"/>
    <property type="match status" value="1"/>
</dbReference>
<dbReference type="SUPFAM" id="SSF55257">
    <property type="entry name" value="RBP11-like subunits of RNA polymerase"/>
    <property type="match status" value="1"/>
</dbReference>
<name>RPOA_ARATH</name>
<organism>
    <name type="scientific">Arabidopsis thaliana</name>
    <name type="common">Mouse-ear cress</name>
    <dbReference type="NCBI Taxonomy" id="3702"/>
    <lineage>
        <taxon>Eukaryota</taxon>
        <taxon>Viridiplantae</taxon>
        <taxon>Streptophyta</taxon>
        <taxon>Embryophyta</taxon>
        <taxon>Tracheophyta</taxon>
        <taxon>Spermatophyta</taxon>
        <taxon>Magnoliopsida</taxon>
        <taxon>eudicotyledons</taxon>
        <taxon>Gunneridae</taxon>
        <taxon>Pentapetalae</taxon>
        <taxon>rosids</taxon>
        <taxon>malvids</taxon>
        <taxon>Brassicales</taxon>
        <taxon>Brassicaceae</taxon>
        <taxon>Camelineae</taxon>
        <taxon>Arabidopsis</taxon>
    </lineage>
</organism>
<sequence>MVREKVKVSTRTLQWKCVESKRDSKRLYYGRFILSPLMKGQADTIGIAMRRALLGEIEGTCITRAKSENIPHDYSNIAGIQESVHEILMNLNEIVLRSNLYGTRNALICVQGPGYITARDIILPPAVEIIDNTQHIATLTEPIDLCIELKIERNRGYSLKMSNNFEDRSYPIDAVFMPVENANHSIHSYGNGNEKQEILFLEIWTNGSLTPKEALHQASRNLINLFIPFLHVEEETFYLENNQHQVTLPFFPFHNRLVNLRKKKKTKELAFQYIFIDQLELPPRIYNCLKKSNIHTLLDLLNNSQEDLIKIEHFHVEDVKKILDILEKK</sequence>
<proteinExistence type="inferred from homology"/>